<dbReference type="EC" id="3.6.1.27" evidence="1"/>
<dbReference type="EMBL" id="CP000750">
    <property type="protein sequence ID" value="ABS03304.1"/>
    <property type="molecule type" value="Genomic_DNA"/>
</dbReference>
<dbReference type="SMR" id="A6W915"/>
<dbReference type="STRING" id="266940.Krad_1818"/>
<dbReference type="KEGG" id="kra:Krad_1818"/>
<dbReference type="eggNOG" id="COG1968">
    <property type="taxonomic scope" value="Bacteria"/>
</dbReference>
<dbReference type="HOGENOM" id="CLU_060296_1_0_11"/>
<dbReference type="OrthoDB" id="9808289at2"/>
<dbReference type="Proteomes" id="UP000001116">
    <property type="component" value="Chromosome"/>
</dbReference>
<dbReference type="GO" id="GO:0005886">
    <property type="term" value="C:plasma membrane"/>
    <property type="evidence" value="ECO:0007669"/>
    <property type="project" value="UniProtKB-SubCell"/>
</dbReference>
<dbReference type="GO" id="GO:0050380">
    <property type="term" value="F:undecaprenyl-diphosphatase activity"/>
    <property type="evidence" value="ECO:0007669"/>
    <property type="project" value="UniProtKB-UniRule"/>
</dbReference>
<dbReference type="GO" id="GO:0071555">
    <property type="term" value="P:cell wall organization"/>
    <property type="evidence" value="ECO:0007669"/>
    <property type="project" value="UniProtKB-KW"/>
</dbReference>
<dbReference type="GO" id="GO:0009252">
    <property type="term" value="P:peptidoglycan biosynthetic process"/>
    <property type="evidence" value="ECO:0007669"/>
    <property type="project" value="UniProtKB-KW"/>
</dbReference>
<dbReference type="GO" id="GO:0008360">
    <property type="term" value="P:regulation of cell shape"/>
    <property type="evidence" value="ECO:0007669"/>
    <property type="project" value="UniProtKB-KW"/>
</dbReference>
<dbReference type="GO" id="GO:0046677">
    <property type="term" value="P:response to antibiotic"/>
    <property type="evidence" value="ECO:0007669"/>
    <property type="project" value="UniProtKB-UniRule"/>
</dbReference>
<dbReference type="HAMAP" id="MF_01006">
    <property type="entry name" value="Undec_diphosphatase"/>
    <property type="match status" value="1"/>
</dbReference>
<dbReference type="InterPro" id="IPR003824">
    <property type="entry name" value="UppP"/>
</dbReference>
<dbReference type="NCBIfam" id="NF001392">
    <property type="entry name" value="PRK00281.2-1"/>
    <property type="match status" value="1"/>
</dbReference>
<dbReference type="NCBIfam" id="TIGR00753">
    <property type="entry name" value="undec_PP_bacA"/>
    <property type="match status" value="1"/>
</dbReference>
<dbReference type="PANTHER" id="PTHR30622">
    <property type="entry name" value="UNDECAPRENYL-DIPHOSPHATASE"/>
    <property type="match status" value="1"/>
</dbReference>
<dbReference type="PANTHER" id="PTHR30622:SF4">
    <property type="entry name" value="UNDECAPRENYL-DIPHOSPHATASE"/>
    <property type="match status" value="1"/>
</dbReference>
<dbReference type="Pfam" id="PF02673">
    <property type="entry name" value="BacA"/>
    <property type="match status" value="1"/>
</dbReference>
<organism>
    <name type="scientific">Kineococcus radiotolerans (strain ATCC BAA-149 / DSM 14245 / SRS30216)</name>
    <dbReference type="NCBI Taxonomy" id="266940"/>
    <lineage>
        <taxon>Bacteria</taxon>
        <taxon>Bacillati</taxon>
        <taxon>Actinomycetota</taxon>
        <taxon>Actinomycetes</taxon>
        <taxon>Kineosporiales</taxon>
        <taxon>Kineosporiaceae</taxon>
        <taxon>Kineococcus</taxon>
    </lineage>
</organism>
<reference key="1">
    <citation type="journal article" date="2008" name="PLoS ONE">
        <title>Survival in nuclear waste, extreme resistance, and potential applications gleaned from the genome sequence of Kineococcus radiotolerans SRS30216.</title>
        <authorList>
            <person name="Bagwell C.E."/>
            <person name="Bhat S."/>
            <person name="Hawkins G.M."/>
            <person name="Smith B.W."/>
            <person name="Biswas T."/>
            <person name="Hoover T.R."/>
            <person name="Saunders E."/>
            <person name="Han C.S."/>
            <person name="Tsodikov O.V."/>
            <person name="Shimkets L.J."/>
        </authorList>
    </citation>
    <scope>NUCLEOTIDE SEQUENCE [LARGE SCALE GENOMIC DNA]</scope>
    <source>
        <strain>ATCC BAA-149 / DSM 14245 / SRS30216</strain>
    </source>
</reference>
<protein>
    <recommendedName>
        <fullName evidence="1">Undecaprenyl-diphosphatase</fullName>
        <ecNumber evidence="1">3.6.1.27</ecNumber>
    </recommendedName>
    <alternativeName>
        <fullName evidence="1">Bacitracin resistance protein</fullName>
    </alternativeName>
    <alternativeName>
        <fullName evidence="1">Undecaprenyl pyrophosphate phosphatase</fullName>
    </alternativeName>
</protein>
<sequence length="281" mass="29807">MSMGIVEGAFLGLVQGLTEFLPISSSGHLAVVGTLLGSDPGAAFTAICQLGTEAAVIGYFRKDIARIIGHWARSLVGRLPRNDPDARMGWLVTLGTIPIGVLGLLFQDSIETVLRGFVVIGTTLWLFALVLGAADRFGRKERTLDQLSWKHGLLFGLAQALALIPGVSRSGGTITMGLLLGYTREAAARYSFLLAIPAVVLSGFYQLYDELSRGTTIAWVPTAVATVVAFVVGYAVIAWLMRFISTHSYTPFVVYRIAAAVVVYALVLAGALPAFQGTGGS</sequence>
<keyword id="KW-0046">Antibiotic resistance</keyword>
<keyword id="KW-1003">Cell membrane</keyword>
<keyword id="KW-0133">Cell shape</keyword>
<keyword id="KW-0961">Cell wall biogenesis/degradation</keyword>
<keyword id="KW-0378">Hydrolase</keyword>
<keyword id="KW-0472">Membrane</keyword>
<keyword id="KW-0573">Peptidoglycan synthesis</keyword>
<keyword id="KW-1185">Reference proteome</keyword>
<keyword id="KW-0812">Transmembrane</keyword>
<keyword id="KW-1133">Transmembrane helix</keyword>
<gene>
    <name evidence="1" type="primary">uppP</name>
    <name type="ordered locus">Krad_1818</name>
</gene>
<name>UPPP_KINRD</name>
<evidence type="ECO:0000255" key="1">
    <source>
        <dbReference type="HAMAP-Rule" id="MF_01006"/>
    </source>
</evidence>
<feature type="chain" id="PRO_1000083980" description="Undecaprenyl-diphosphatase">
    <location>
        <begin position="1"/>
        <end position="281"/>
    </location>
</feature>
<feature type="transmembrane region" description="Helical" evidence="1">
    <location>
        <begin position="90"/>
        <end position="110"/>
    </location>
</feature>
<feature type="transmembrane region" description="Helical" evidence="1">
    <location>
        <begin position="113"/>
        <end position="133"/>
    </location>
</feature>
<feature type="transmembrane region" description="Helical" evidence="1">
    <location>
        <begin position="147"/>
        <end position="167"/>
    </location>
</feature>
<feature type="transmembrane region" description="Helical" evidence="1">
    <location>
        <begin position="191"/>
        <end position="211"/>
    </location>
</feature>
<feature type="transmembrane region" description="Helical" evidence="1">
    <location>
        <begin position="217"/>
        <end position="237"/>
    </location>
</feature>
<feature type="transmembrane region" description="Helical" evidence="1">
    <location>
        <begin position="257"/>
        <end position="277"/>
    </location>
</feature>
<comment type="function">
    <text evidence="1">Catalyzes the dephosphorylation of undecaprenyl diphosphate (UPP). Confers resistance to bacitracin.</text>
</comment>
<comment type="catalytic activity">
    <reaction evidence="1">
        <text>di-trans,octa-cis-undecaprenyl diphosphate + H2O = di-trans,octa-cis-undecaprenyl phosphate + phosphate + H(+)</text>
        <dbReference type="Rhea" id="RHEA:28094"/>
        <dbReference type="ChEBI" id="CHEBI:15377"/>
        <dbReference type="ChEBI" id="CHEBI:15378"/>
        <dbReference type="ChEBI" id="CHEBI:43474"/>
        <dbReference type="ChEBI" id="CHEBI:58405"/>
        <dbReference type="ChEBI" id="CHEBI:60392"/>
        <dbReference type="EC" id="3.6.1.27"/>
    </reaction>
</comment>
<comment type="subcellular location">
    <subcellularLocation>
        <location evidence="1">Cell membrane</location>
        <topology evidence="1">Multi-pass membrane protein</topology>
    </subcellularLocation>
</comment>
<comment type="miscellaneous">
    <text>Bacitracin is thought to be involved in the inhibition of peptidoglycan synthesis by sequestering undecaprenyl diphosphate, thereby reducing the pool of lipid carrier available.</text>
</comment>
<comment type="similarity">
    <text evidence="1">Belongs to the UppP family.</text>
</comment>
<accession>A6W915</accession>
<proteinExistence type="inferred from homology"/>